<sequence length="254" mass="29017">MFKINALNNLFVQFFDSINKFVYNIVPDKNYSYGLAIIILTIIIKTLLVPFSIKQIKSSVLMNALQPELKKLQTKLKSDPQKLQQETMKLYKEKNVNPFGGCLLLIIQYPILIALYYVFYSLHIKGIGFLWIHDLSQKATFSNWTTWILPIVSGATTYLSGILTMPPSSDPAQRKQTTTMNIGMSIFLLWMSWNFSAALVLYWTVSNLFQMAQSKIIITAVTAKLEAEKNSVEDSSNIISQNIDNKKNKKNKKK</sequence>
<gene>
    <name type="primary">yidC</name>
    <name type="ordered locus">CA_C3736</name>
</gene>
<dbReference type="EMBL" id="AE001437">
    <property type="protein sequence ID" value="AAK81656.1"/>
    <property type="molecule type" value="Genomic_DNA"/>
</dbReference>
<dbReference type="PIR" id="E97358">
    <property type="entry name" value="E97358"/>
</dbReference>
<dbReference type="RefSeq" id="NP_350316.1">
    <property type="nucleotide sequence ID" value="NC_003030.1"/>
</dbReference>
<dbReference type="RefSeq" id="WP_010966996.1">
    <property type="nucleotide sequence ID" value="NC_003030.1"/>
</dbReference>
<dbReference type="SMR" id="Q97CW0"/>
<dbReference type="STRING" id="272562.CA_C3736"/>
<dbReference type="KEGG" id="cac:CA_C3736"/>
<dbReference type="PATRIC" id="fig|272562.8.peg.3926"/>
<dbReference type="eggNOG" id="COG0706">
    <property type="taxonomic scope" value="Bacteria"/>
</dbReference>
<dbReference type="HOGENOM" id="CLU_036138_4_2_9"/>
<dbReference type="OrthoDB" id="9780552at2"/>
<dbReference type="Proteomes" id="UP000000814">
    <property type="component" value="Chromosome"/>
</dbReference>
<dbReference type="GO" id="GO:0005886">
    <property type="term" value="C:plasma membrane"/>
    <property type="evidence" value="ECO:0007669"/>
    <property type="project" value="UniProtKB-SubCell"/>
</dbReference>
<dbReference type="GO" id="GO:0032977">
    <property type="term" value="F:membrane insertase activity"/>
    <property type="evidence" value="ECO:0007669"/>
    <property type="project" value="InterPro"/>
</dbReference>
<dbReference type="GO" id="GO:0051205">
    <property type="term" value="P:protein insertion into membrane"/>
    <property type="evidence" value="ECO:0007669"/>
    <property type="project" value="TreeGrafter"/>
</dbReference>
<dbReference type="GO" id="GO:0015031">
    <property type="term" value="P:protein transport"/>
    <property type="evidence" value="ECO:0007669"/>
    <property type="project" value="UniProtKB-KW"/>
</dbReference>
<dbReference type="CDD" id="cd20070">
    <property type="entry name" value="5TM_YidC_Alb3"/>
    <property type="match status" value="1"/>
</dbReference>
<dbReference type="InterPro" id="IPR001708">
    <property type="entry name" value="YidC/ALB3/OXA1/COX18"/>
</dbReference>
<dbReference type="InterPro" id="IPR028055">
    <property type="entry name" value="YidC/Oxa/ALB_C"/>
</dbReference>
<dbReference type="InterPro" id="IPR047196">
    <property type="entry name" value="YidC_ALB_C"/>
</dbReference>
<dbReference type="NCBIfam" id="TIGR03592">
    <property type="entry name" value="yidC_oxa1_cterm"/>
    <property type="match status" value="1"/>
</dbReference>
<dbReference type="PANTHER" id="PTHR12428:SF65">
    <property type="entry name" value="CYTOCHROME C OXIDASE ASSEMBLY PROTEIN COX18, MITOCHONDRIAL"/>
    <property type="match status" value="1"/>
</dbReference>
<dbReference type="PANTHER" id="PTHR12428">
    <property type="entry name" value="OXA1"/>
    <property type="match status" value="1"/>
</dbReference>
<dbReference type="Pfam" id="PF02096">
    <property type="entry name" value="60KD_IMP"/>
    <property type="match status" value="1"/>
</dbReference>
<name>YIDC_CLOAB</name>
<reference key="1">
    <citation type="journal article" date="2001" name="J. Bacteriol.">
        <title>Genome sequence and comparative analysis of the solvent-producing bacterium Clostridium acetobutylicum.</title>
        <authorList>
            <person name="Noelling J."/>
            <person name="Breton G."/>
            <person name="Omelchenko M.V."/>
            <person name="Makarova K.S."/>
            <person name="Zeng Q."/>
            <person name="Gibson R."/>
            <person name="Lee H.M."/>
            <person name="Dubois J."/>
            <person name="Qiu D."/>
            <person name="Hitti J."/>
            <person name="Wolf Y.I."/>
            <person name="Tatusov R.L."/>
            <person name="Sabathe F."/>
            <person name="Doucette-Stamm L.A."/>
            <person name="Soucaille P."/>
            <person name="Daly M.J."/>
            <person name="Bennett G.N."/>
            <person name="Koonin E.V."/>
            <person name="Smith D.R."/>
        </authorList>
    </citation>
    <scope>NUCLEOTIDE SEQUENCE [LARGE SCALE GENOMIC DNA]</scope>
    <source>
        <strain>ATCC 824 / DSM 792 / JCM 1419 / IAM 19013 / LMG 5710 / NBRC 13948 / NRRL B-527 / VKM B-1787 / 2291 / W</strain>
    </source>
</reference>
<protein>
    <recommendedName>
        <fullName>Membrane protein insertase YidC</fullName>
    </recommendedName>
    <alternativeName>
        <fullName>Foldase YidC</fullName>
    </alternativeName>
    <alternativeName>
        <fullName>Membrane integrase YidC</fullName>
    </alternativeName>
    <alternativeName>
        <fullName>Membrane protein YidC</fullName>
    </alternativeName>
</protein>
<comment type="function">
    <text evidence="1">Required for the insertion and/or proper folding and/or complex formation of integral membrane proteins into the membrane. Involved in integration of membrane proteins that insert both dependently and independently of the Sec translocase complex, as well as at least some lipoproteins. Aids folding of multispanning membrane proteins (By similarity).</text>
</comment>
<comment type="subunit">
    <text evidence="1">Interacts with the Sec translocase complex via SecD. Specifically interacts with transmembrane segments of nascent integral membrane proteins during membrane integration (By similarity).</text>
</comment>
<comment type="subcellular location">
    <subcellularLocation>
        <location evidence="1">Cell membrane</location>
        <topology evidence="1">Multi-pass membrane protein</topology>
    </subcellularLocation>
</comment>
<comment type="similarity">
    <text evidence="4">Belongs to the OXA1/ALB3/YidC family. Type 1 subfamily.</text>
</comment>
<proteinExistence type="inferred from homology"/>
<feature type="chain" id="PRO_0000124777" description="Membrane protein insertase YidC">
    <location>
        <begin position="1"/>
        <end position="254"/>
    </location>
</feature>
<feature type="transmembrane region" description="Helical" evidence="2">
    <location>
        <begin position="33"/>
        <end position="53"/>
    </location>
</feature>
<feature type="transmembrane region" description="Helical" evidence="2">
    <location>
        <begin position="99"/>
        <end position="119"/>
    </location>
</feature>
<feature type="transmembrane region" description="Helical" evidence="2">
    <location>
        <begin position="147"/>
        <end position="167"/>
    </location>
</feature>
<feature type="transmembrane region" description="Helical" evidence="2">
    <location>
        <begin position="182"/>
        <end position="202"/>
    </location>
</feature>
<feature type="region of interest" description="Disordered" evidence="3">
    <location>
        <begin position="233"/>
        <end position="254"/>
    </location>
</feature>
<feature type="compositionally biased region" description="Polar residues" evidence="3">
    <location>
        <begin position="233"/>
        <end position="243"/>
    </location>
</feature>
<accession>Q97CW0</accession>
<organism>
    <name type="scientific">Clostridium acetobutylicum (strain ATCC 824 / DSM 792 / JCM 1419 / IAM 19013 / LMG 5710 / NBRC 13948 / NRRL B-527 / VKM B-1787 / 2291 / W)</name>
    <dbReference type="NCBI Taxonomy" id="272562"/>
    <lineage>
        <taxon>Bacteria</taxon>
        <taxon>Bacillati</taxon>
        <taxon>Bacillota</taxon>
        <taxon>Clostridia</taxon>
        <taxon>Eubacteriales</taxon>
        <taxon>Clostridiaceae</taxon>
        <taxon>Clostridium</taxon>
    </lineage>
</organism>
<evidence type="ECO:0000250" key="1"/>
<evidence type="ECO:0000255" key="2"/>
<evidence type="ECO:0000256" key="3">
    <source>
        <dbReference type="SAM" id="MobiDB-lite"/>
    </source>
</evidence>
<evidence type="ECO:0000305" key="4"/>
<keyword id="KW-1003">Cell membrane</keyword>
<keyword id="KW-0143">Chaperone</keyword>
<keyword id="KW-0472">Membrane</keyword>
<keyword id="KW-0653">Protein transport</keyword>
<keyword id="KW-1185">Reference proteome</keyword>
<keyword id="KW-0812">Transmembrane</keyword>
<keyword id="KW-1133">Transmembrane helix</keyword>
<keyword id="KW-0813">Transport</keyword>